<sequence length="429" mass="45719">MDRIKIVGGNKLNGVIPISGAKNAALPLMIASLLTDDTLTLENVPHLADVEQLIRILSNHGVDYSVNGRREHQNGPYSRTIHFTARNIVDTTAPYELVSRMRASFWVIGPLLARMGEANVSLPGGCAIGTRPVDLLLDALLALGAEIDIENGYAKAKARNGLVGARYKFPKVSVGATHVMLMAATLAKGETIIENAAREPEVANLADCLNAMGAKISGAGSSTIHVQGVTNLSGARVRIIPDRIEAGTYAMAVAMTGGDVLLEGAQESQLSCVLETLRQAGAEINETNSGLRVVRNGHGIQPVDITTDPFPGFPTDLQAQFMGLMTRAKGTSHITETIFENRFMHVQELARLGAKISLSGQTATVEGVERLKGAQVMATDLRASVSLVIAGLAAEGETIVNRVYHLDRGFERLEEKLSRCGADVKRISG</sequence>
<dbReference type="EC" id="2.5.1.7" evidence="1"/>
<dbReference type="EMBL" id="CP001488">
    <property type="protein sequence ID" value="ACO00085.1"/>
    <property type="molecule type" value="Genomic_DNA"/>
</dbReference>
<dbReference type="RefSeq" id="WP_002965536.1">
    <property type="nucleotide sequence ID" value="NC_012441.1"/>
</dbReference>
<dbReference type="SMR" id="C0RGX7"/>
<dbReference type="GeneID" id="97534345"/>
<dbReference type="KEGG" id="bmi:BMEA_A0289"/>
<dbReference type="HOGENOM" id="CLU_027387_0_0_5"/>
<dbReference type="UniPathway" id="UPA00219"/>
<dbReference type="Proteomes" id="UP000001748">
    <property type="component" value="Chromosome I"/>
</dbReference>
<dbReference type="GO" id="GO:0005737">
    <property type="term" value="C:cytoplasm"/>
    <property type="evidence" value="ECO:0007669"/>
    <property type="project" value="UniProtKB-SubCell"/>
</dbReference>
<dbReference type="GO" id="GO:0008760">
    <property type="term" value="F:UDP-N-acetylglucosamine 1-carboxyvinyltransferase activity"/>
    <property type="evidence" value="ECO:0007669"/>
    <property type="project" value="UniProtKB-UniRule"/>
</dbReference>
<dbReference type="GO" id="GO:0051301">
    <property type="term" value="P:cell division"/>
    <property type="evidence" value="ECO:0007669"/>
    <property type="project" value="UniProtKB-KW"/>
</dbReference>
<dbReference type="GO" id="GO:0071555">
    <property type="term" value="P:cell wall organization"/>
    <property type="evidence" value="ECO:0007669"/>
    <property type="project" value="UniProtKB-KW"/>
</dbReference>
<dbReference type="GO" id="GO:0009252">
    <property type="term" value="P:peptidoglycan biosynthetic process"/>
    <property type="evidence" value="ECO:0007669"/>
    <property type="project" value="UniProtKB-UniRule"/>
</dbReference>
<dbReference type="GO" id="GO:0008360">
    <property type="term" value="P:regulation of cell shape"/>
    <property type="evidence" value="ECO:0007669"/>
    <property type="project" value="UniProtKB-KW"/>
</dbReference>
<dbReference type="GO" id="GO:0019277">
    <property type="term" value="P:UDP-N-acetylgalactosamine biosynthetic process"/>
    <property type="evidence" value="ECO:0007669"/>
    <property type="project" value="InterPro"/>
</dbReference>
<dbReference type="CDD" id="cd01555">
    <property type="entry name" value="UdpNAET"/>
    <property type="match status" value="1"/>
</dbReference>
<dbReference type="FunFam" id="3.65.10.10:FF:000001">
    <property type="entry name" value="UDP-N-acetylglucosamine 1-carboxyvinyltransferase"/>
    <property type="match status" value="1"/>
</dbReference>
<dbReference type="Gene3D" id="3.65.10.10">
    <property type="entry name" value="Enolpyruvate transferase domain"/>
    <property type="match status" value="2"/>
</dbReference>
<dbReference type="HAMAP" id="MF_00111">
    <property type="entry name" value="MurA"/>
    <property type="match status" value="1"/>
</dbReference>
<dbReference type="InterPro" id="IPR001986">
    <property type="entry name" value="Enolpyruvate_Tfrase_dom"/>
</dbReference>
<dbReference type="InterPro" id="IPR036968">
    <property type="entry name" value="Enolpyruvate_Tfrase_sf"/>
</dbReference>
<dbReference type="InterPro" id="IPR050068">
    <property type="entry name" value="MurA_subfamily"/>
</dbReference>
<dbReference type="InterPro" id="IPR013792">
    <property type="entry name" value="RNA3'P_cycl/enolpyr_Trfase_a/b"/>
</dbReference>
<dbReference type="InterPro" id="IPR005750">
    <property type="entry name" value="UDP_GlcNAc_COvinyl_MurA"/>
</dbReference>
<dbReference type="NCBIfam" id="TIGR01072">
    <property type="entry name" value="murA"/>
    <property type="match status" value="1"/>
</dbReference>
<dbReference type="NCBIfam" id="NF006873">
    <property type="entry name" value="PRK09369.1"/>
    <property type="match status" value="1"/>
</dbReference>
<dbReference type="PANTHER" id="PTHR43783">
    <property type="entry name" value="UDP-N-ACETYLGLUCOSAMINE 1-CARBOXYVINYLTRANSFERASE"/>
    <property type="match status" value="1"/>
</dbReference>
<dbReference type="PANTHER" id="PTHR43783:SF1">
    <property type="entry name" value="UDP-N-ACETYLGLUCOSAMINE 1-CARBOXYVINYLTRANSFERASE"/>
    <property type="match status" value="1"/>
</dbReference>
<dbReference type="Pfam" id="PF00275">
    <property type="entry name" value="EPSP_synthase"/>
    <property type="match status" value="1"/>
</dbReference>
<dbReference type="SUPFAM" id="SSF55205">
    <property type="entry name" value="EPT/RTPC-like"/>
    <property type="match status" value="1"/>
</dbReference>
<keyword id="KW-0131">Cell cycle</keyword>
<keyword id="KW-0132">Cell division</keyword>
<keyword id="KW-0133">Cell shape</keyword>
<keyword id="KW-0961">Cell wall biogenesis/degradation</keyword>
<keyword id="KW-0963">Cytoplasm</keyword>
<keyword id="KW-0573">Peptidoglycan synthesis</keyword>
<keyword id="KW-0670">Pyruvate</keyword>
<keyword id="KW-0808">Transferase</keyword>
<evidence type="ECO:0000255" key="1">
    <source>
        <dbReference type="HAMAP-Rule" id="MF_00111"/>
    </source>
</evidence>
<organism>
    <name type="scientific">Brucella melitensis biotype 2 (strain ATCC 23457)</name>
    <dbReference type="NCBI Taxonomy" id="546272"/>
    <lineage>
        <taxon>Bacteria</taxon>
        <taxon>Pseudomonadati</taxon>
        <taxon>Pseudomonadota</taxon>
        <taxon>Alphaproteobacteria</taxon>
        <taxon>Hyphomicrobiales</taxon>
        <taxon>Brucellaceae</taxon>
        <taxon>Brucella/Ochrobactrum group</taxon>
        <taxon>Brucella</taxon>
    </lineage>
</organism>
<accession>C0RGX7</accession>
<protein>
    <recommendedName>
        <fullName evidence="1">UDP-N-acetylglucosamine 1-carboxyvinyltransferase</fullName>
        <ecNumber evidence="1">2.5.1.7</ecNumber>
    </recommendedName>
    <alternativeName>
        <fullName evidence="1">Enoylpyruvate transferase</fullName>
    </alternativeName>
    <alternativeName>
        <fullName evidence="1">UDP-N-acetylglucosamine enolpyruvyl transferase</fullName>
        <shortName evidence="1">EPT</shortName>
    </alternativeName>
</protein>
<comment type="function">
    <text evidence="1">Cell wall formation. Adds enolpyruvyl to UDP-N-acetylglucosamine.</text>
</comment>
<comment type="catalytic activity">
    <reaction evidence="1">
        <text>phosphoenolpyruvate + UDP-N-acetyl-alpha-D-glucosamine = UDP-N-acetyl-3-O-(1-carboxyvinyl)-alpha-D-glucosamine + phosphate</text>
        <dbReference type="Rhea" id="RHEA:18681"/>
        <dbReference type="ChEBI" id="CHEBI:43474"/>
        <dbReference type="ChEBI" id="CHEBI:57705"/>
        <dbReference type="ChEBI" id="CHEBI:58702"/>
        <dbReference type="ChEBI" id="CHEBI:68483"/>
        <dbReference type="EC" id="2.5.1.7"/>
    </reaction>
</comment>
<comment type="pathway">
    <text evidence="1">Cell wall biogenesis; peptidoglycan biosynthesis.</text>
</comment>
<comment type="subcellular location">
    <subcellularLocation>
        <location evidence="1">Cytoplasm</location>
    </subcellularLocation>
</comment>
<comment type="similarity">
    <text evidence="1">Belongs to the EPSP synthase family. MurA subfamily.</text>
</comment>
<name>MURA_BRUMB</name>
<reference key="1">
    <citation type="submission" date="2009-03" db="EMBL/GenBank/DDBJ databases">
        <title>Brucella melitensis ATCC 23457 whole genome shotgun sequencing project.</title>
        <authorList>
            <person name="Setubal J.C."/>
            <person name="Boyle S."/>
            <person name="Crasta O.R."/>
            <person name="Gillespie J.J."/>
            <person name="Kenyon R.W."/>
            <person name="Lu J."/>
            <person name="Mane S."/>
            <person name="Nagrani S."/>
            <person name="Shallom J.M."/>
            <person name="Shallom S."/>
            <person name="Shukla M."/>
            <person name="Snyder E.E."/>
            <person name="Sobral B.W."/>
            <person name="Wattam A.R."/>
            <person name="Will R."/>
            <person name="Williams K."/>
            <person name="Yoo H."/>
            <person name="Munk C."/>
            <person name="Tapia R."/>
            <person name="Han C."/>
            <person name="Detter J.C."/>
            <person name="Bruce D."/>
            <person name="Brettin T.S."/>
        </authorList>
    </citation>
    <scope>NUCLEOTIDE SEQUENCE [LARGE SCALE GENOMIC DNA]</scope>
    <source>
        <strain>ATCC 23457</strain>
    </source>
</reference>
<proteinExistence type="inferred from homology"/>
<feature type="chain" id="PRO_1000192075" description="UDP-N-acetylglucosamine 1-carboxyvinyltransferase">
    <location>
        <begin position="1"/>
        <end position="429"/>
    </location>
</feature>
<feature type="active site" description="Proton donor" evidence="1">
    <location>
        <position position="126"/>
    </location>
</feature>
<feature type="binding site" evidence="1">
    <location>
        <begin position="22"/>
        <end position="23"/>
    </location>
    <ligand>
        <name>phosphoenolpyruvate</name>
        <dbReference type="ChEBI" id="CHEBI:58702"/>
    </ligand>
</feature>
<feature type="binding site" evidence="1">
    <location>
        <position position="102"/>
    </location>
    <ligand>
        <name>UDP-N-acetyl-alpha-D-glucosamine</name>
        <dbReference type="ChEBI" id="CHEBI:57705"/>
    </ligand>
</feature>
<feature type="binding site" evidence="1">
    <location>
        <begin position="131"/>
        <end position="135"/>
    </location>
    <ligand>
        <name>UDP-N-acetyl-alpha-D-glucosamine</name>
        <dbReference type="ChEBI" id="CHEBI:57705"/>
    </ligand>
</feature>
<feature type="binding site" evidence="1">
    <location>
        <begin position="171"/>
        <end position="174"/>
    </location>
    <ligand>
        <name>UDP-N-acetyl-alpha-D-glucosamine</name>
        <dbReference type="ChEBI" id="CHEBI:57705"/>
    </ligand>
</feature>
<feature type="binding site" evidence="1">
    <location>
        <position position="316"/>
    </location>
    <ligand>
        <name>UDP-N-acetyl-alpha-D-glucosamine</name>
        <dbReference type="ChEBI" id="CHEBI:57705"/>
    </ligand>
</feature>
<feature type="binding site" evidence="1">
    <location>
        <position position="338"/>
    </location>
    <ligand>
        <name>UDP-N-acetyl-alpha-D-glucosamine</name>
        <dbReference type="ChEBI" id="CHEBI:57705"/>
    </ligand>
</feature>
<feature type="modified residue" description="2-(S-cysteinyl)pyruvic acid O-phosphothioketal" evidence="1">
    <location>
        <position position="126"/>
    </location>
</feature>
<gene>
    <name evidence="1" type="primary">murA</name>
    <name type="ordered locus">BMEA_A0289</name>
</gene>